<organism>
    <name type="scientific">Parvibaculum lavamentivorans (strain DS-1 / DSM 13023 / NCIMB 13966)</name>
    <dbReference type="NCBI Taxonomy" id="402881"/>
    <lineage>
        <taxon>Bacteria</taxon>
        <taxon>Pseudomonadati</taxon>
        <taxon>Pseudomonadota</taxon>
        <taxon>Alphaproteobacteria</taxon>
        <taxon>Hyphomicrobiales</taxon>
        <taxon>Parvibaculaceae</taxon>
        <taxon>Parvibaculum</taxon>
    </lineage>
</organism>
<dbReference type="EC" id="5.6.1.7" evidence="1"/>
<dbReference type="EMBL" id="CP000774">
    <property type="protein sequence ID" value="ABS62233.1"/>
    <property type="molecule type" value="Genomic_DNA"/>
</dbReference>
<dbReference type="RefSeq" id="WP_011995524.1">
    <property type="nucleotide sequence ID" value="NC_009719.1"/>
</dbReference>
<dbReference type="SMR" id="A7HQQ0"/>
<dbReference type="STRING" id="402881.Plav_0610"/>
<dbReference type="KEGG" id="pla:Plav_0610"/>
<dbReference type="eggNOG" id="COG0459">
    <property type="taxonomic scope" value="Bacteria"/>
</dbReference>
<dbReference type="HOGENOM" id="CLU_016503_3_0_5"/>
<dbReference type="OrthoDB" id="9766614at2"/>
<dbReference type="Proteomes" id="UP000006377">
    <property type="component" value="Chromosome"/>
</dbReference>
<dbReference type="GO" id="GO:0005737">
    <property type="term" value="C:cytoplasm"/>
    <property type="evidence" value="ECO:0007669"/>
    <property type="project" value="UniProtKB-SubCell"/>
</dbReference>
<dbReference type="GO" id="GO:0005524">
    <property type="term" value="F:ATP binding"/>
    <property type="evidence" value="ECO:0007669"/>
    <property type="project" value="UniProtKB-UniRule"/>
</dbReference>
<dbReference type="GO" id="GO:0140662">
    <property type="term" value="F:ATP-dependent protein folding chaperone"/>
    <property type="evidence" value="ECO:0007669"/>
    <property type="project" value="InterPro"/>
</dbReference>
<dbReference type="GO" id="GO:0016853">
    <property type="term" value="F:isomerase activity"/>
    <property type="evidence" value="ECO:0007669"/>
    <property type="project" value="UniProtKB-KW"/>
</dbReference>
<dbReference type="GO" id="GO:0051082">
    <property type="term" value="F:unfolded protein binding"/>
    <property type="evidence" value="ECO:0007669"/>
    <property type="project" value="UniProtKB-UniRule"/>
</dbReference>
<dbReference type="GO" id="GO:0042026">
    <property type="term" value="P:protein refolding"/>
    <property type="evidence" value="ECO:0007669"/>
    <property type="project" value="UniProtKB-UniRule"/>
</dbReference>
<dbReference type="CDD" id="cd03344">
    <property type="entry name" value="GroEL"/>
    <property type="match status" value="1"/>
</dbReference>
<dbReference type="FunFam" id="1.10.560.10:FF:000001">
    <property type="entry name" value="60 kDa chaperonin"/>
    <property type="match status" value="1"/>
</dbReference>
<dbReference type="FunFam" id="3.50.7.10:FF:000001">
    <property type="entry name" value="60 kDa chaperonin"/>
    <property type="match status" value="1"/>
</dbReference>
<dbReference type="Gene3D" id="3.50.7.10">
    <property type="entry name" value="GroEL"/>
    <property type="match status" value="1"/>
</dbReference>
<dbReference type="Gene3D" id="1.10.560.10">
    <property type="entry name" value="GroEL-like equatorial domain"/>
    <property type="match status" value="1"/>
</dbReference>
<dbReference type="Gene3D" id="3.30.260.10">
    <property type="entry name" value="TCP-1-like chaperonin intermediate domain"/>
    <property type="match status" value="1"/>
</dbReference>
<dbReference type="HAMAP" id="MF_00600">
    <property type="entry name" value="CH60"/>
    <property type="match status" value="1"/>
</dbReference>
<dbReference type="InterPro" id="IPR018370">
    <property type="entry name" value="Chaperonin_Cpn60_CS"/>
</dbReference>
<dbReference type="InterPro" id="IPR001844">
    <property type="entry name" value="Cpn60/GroEL"/>
</dbReference>
<dbReference type="InterPro" id="IPR002423">
    <property type="entry name" value="Cpn60/GroEL/TCP-1"/>
</dbReference>
<dbReference type="InterPro" id="IPR027409">
    <property type="entry name" value="GroEL-like_apical_dom_sf"/>
</dbReference>
<dbReference type="InterPro" id="IPR027413">
    <property type="entry name" value="GROEL-like_equatorial_sf"/>
</dbReference>
<dbReference type="InterPro" id="IPR027410">
    <property type="entry name" value="TCP-1-like_intermed_sf"/>
</dbReference>
<dbReference type="NCBIfam" id="TIGR02348">
    <property type="entry name" value="GroEL"/>
    <property type="match status" value="1"/>
</dbReference>
<dbReference type="NCBIfam" id="NF000592">
    <property type="entry name" value="PRK00013.1"/>
    <property type="match status" value="1"/>
</dbReference>
<dbReference type="NCBIfam" id="NF009487">
    <property type="entry name" value="PRK12849.1"/>
    <property type="match status" value="1"/>
</dbReference>
<dbReference type="NCBIfam" id="NF009488">
    <property type="entry name" value="PRK12850.1"/>
    <property type="match status" value="1"/>
</dbReference>
<dbReference type="NCBIfam" id="NF009489">
    <property type="entry name" value="PRK12851.1"/>
    <property type="match status" value="1"/>
</dbReference>
<dbReference type="PANTHER" id="PTHR45633">
    <property type="entry name" value="60 KDA HEAT SHOCK PROTEIN, MITOCHONDRIAL"/>
    <property type="match status" value="1"/>
</dbReference>
<dbReference type="Pfam" id="PF00118">
    <property type="entry name" value="Cpn60_TCP1"/>
    <property type="match status" value="1"/>
</dbReference>
<dbReference type="PRINTS" id="PR00298">
    <property type="entry name" value="CHAPERONIN60"/>
</dbReference>
<dbReference type="SUPFAM" id="SSF52029">
    <property type="entry name" value="GroEL apical domain-like"/>
    <property type="match status" value="1"/>
</dbReference>
<dbReference type="SUPFAM" id="SSF48592">
    <property type="entry name" value="GroEL equatorial domain-like"/>
    <property type="match status" value="1"/>
</dbReference>
<dbReference type="SUPFAM" id="SSF54849">
    <property type="entry name" value="GroEL-intermediate domain like"/>
    <property type="match status" value="1"/>
</dbReference>
<dbReference type="PROSITE" id="PS00296">
    <property type="entry name" value="CHAPERONINS_CPN60"/>
    <property type="match status" value="1"/>
</dbReference>
<gene>
    <name evidence="1" type="primary">groEL</name>
    <name evidence="1" type="synonym">groL</name>
    <name type="ordered locus">Plav_0610</name>
</gene>
<keyword id="KW-0067">ATP-binding</keyword>
<keyword id="KW-0143">Chaperone</keyword>
<keyword id="KW-0963">Cytoplasm</keyword>
<keyword id="KW-0413">Isomerase</keyword>
<keyword id="KW-0547">Nucleotide-binding</keyword>
<keyword id="KW-1185">Reference proteome</keyword>
<accession>A7HQQ0</accession>
<proteinExistence type="inferred from homology"/>
<protein>
    <recommendedName>
        <fullName evidence="1">Chaperonin GroEL</fullName>
        <ecNumber evidence="1">5.6.1.7</ecNumber>
    </recommendedName>
    <alternativeName>
        <fullName evidence="1">60 kDa chaperonin</fullName>
    </alternativeName>
    <alternativeName>
        <fullName evidence="1">Chaperonin-60</fullName>
        <shortName evidence="1">Cpn60</shortName>
    </alternativeName>
</protein>
<evidence type="ECO:0000255" key="1">
    <source>
        <dbReference type="HAMAP-Rule" id="MF_00600"/>
    </source>
</evidence>
<feature type="chain" id="PRO_0000332035" description="Chaperonin GroEL">
    <location>
        <begin position="1"/>
        <end position="550"/>
    </location>
</feature>
<feature type="binding site" evidence="1">
    <location>
        <begin position="29"/>
        <end position="32"/>
    </location>
    <ligand>
        <name>ATP</name>
        <dbReference type="ChEBI" id="CHEBI:30616"/>
    </ligand>
</feature>
<feature type="binding site" evidence="1">
    <location>
        <position position="50"/>
    </location>
    <ligand>
        <name>ATP</name>
        <dbReference type="ChEBI" id="CHEBI:30616"/>
    </ligand>
</feature>
<feature type="binding site" evidence="1">
    <location>
        <begin position="86"/>
        <end position="90"/>
    </location>
    <ligand>
        <name>ATP</name>
        <dbReference type="ChEBI" id="CHEBI:30616"/>
    </ligand>
</feature>
<feature type="binding site" evidence="1">
    <location>
        <position position="414"/>
    </location>
    <ligand>
        <name>ATP</name>
        <dbReference type="ChEBI" id="CHEBI:30616"/>
    </ligand>
</feature>
<feature type="binding site" evidence="1">
    <location>
        <position position="495"/>
    </location>
    <ligand>
        <name>ATP</name>
        <dbReference type="ChEBI" id="CHEBI:30616"/>
    </ligand>
</feature>
<comment type="function">
    <text evidence="1">Together with its co-chaperonin GroES, plays an essential role in assisting protein folding. The GroEL-GroES system forms a nano-cage that allows encapsulation of the non-native substrate proteins and provides a physical environment optimized to promote and accelerate protein folding.</text>
</comment>
<comment type="catalytic activity">
    <reaction evidence="1">
        <text>ATP + H2O + a folded polypeptide = ADP + phosphate + an unfolded polypeptide.</text>
        <dbReference type="EC" id="5.6.1.7"/>
    </reaction>
</comment>
<comment type="subunit">
    <text evidence="1">Forms a cylinder of 14 subunits composed of two heptameric rings stacked back-to-back. Interacts with the co-chaperonin GroES.</text>
</comment>
<comment type="subcellular location">
    <subcellularLocation>
        <location evidence="1">Cytoplasm</location>
    </subcellularLocation>
</comment>
<comment type="similarity">
    <text evidence="1">Belongs to the chaperonin (HSP60) family.</text>
</comment>
<name>CH60_PARL1</name>
<reference key="1">
    <citation type="journal article" date="2011" name="Stand. Genomic Sci.">
        <title>Complete genome sequence of Parvibaculum lavamentivorans type strain (DS-1(T)).</title>
        <authorList>
            <person name="Schleheck D."/>
            <person name="Weiss M."/>
            <person name="Pitluck S."/>
            <person name="Bruce D."/>
            <person name="Land M.L."/>
            <person name="Han S."/>
            <person name="Saunders E."/>
            <person name="Tapia R."/>
            <person name="Detter C."/>
            <person name="Brettin T."/>
            <person name="Han J."/>
            <person name="Woyke T."/>
            <person name="Goodwin L."/>
            <person name="Pennacchio L."/>
            <person name="Nolan M."/>
            <person name="Cook A.M."/>
            <person name="Kjelleberg S."/>
            <person name="Thomas T."/>
        </authorList>
    </citation>
    <scope>NUCLEOTIDE SEQUENCE [LARGE SCALE GENOMIC DNA]</scope>
    <source>
        <strain>DS-1 / DSM 13023 / NCIMB 13966</strain>
    </source>
</reference>
<sequence>MAKEVKFGRTAREKMLRGVDILADAVKVTLGPKGRNVVIEKSFGSPRTTKDGVTVAKEIELEDKFENMGAQMVKEVASKTNDTAGDGTTTATVLTQAIVREGAKSVAAGMNPMDLKRGIEIAVRTAVEDITKRSKKVKSNDEVAQVGTISANGESEIGAMIAQAMSRVGNEGVITVEEAKSLDTELDVVEGMQFDRGYLSPYFITNADKMVVELDEPLILLHEKKLTSLQPMLPVLEAVVQSGRPLLIIAEDIEGEALATLVVNKLRGGLKVAAVKAPGFGDRRKAMLEDLAVLSGGQVISEDLGIKLESVTLDMLGKAKRVSITKDDTTIVDGAGKKKDIEARVAQIKRQIEDTTSDYDKEKLQERLAKLAGGVAVIKVGGATEAEVKERKDRVDDALNATRAAVEEGIVPGGGTALLMASKAVGKLVEDNRDIQAGINIIRRALEAPIRQIVENAGVEGSIVVQKVLESKQANFGFDAQKEEYCDLVAAGIIDPTKVVRTALQDAASIAGLLITTEAMIADAPKKDNGAAAGMPGGMGGMGGMGGMDF</sequence>